<organism>
    <name type="scientific">Escherichia coli O157:H7</name>
    <dbReference type="NCBI Taxonomy" id="83334"/>
    <lineage>
        <taxon>Bacteria</taxon>
        <taxon>Pseudomonadati</taxon>
        <taxon>Pseudomonadota</taxon>
        <taxon>Gammaproteobacteria</taxon>
        <taxon>Enterobacterales</taxon>
        <taxon>Enterobacteriaceae</taxon>
        <taxon>Escherichia</taxon>
    </lineage>
</organism>
<gene>
    <name type="primary">hflK</name>
    <name type="ordered locus">Z5781</name>
    <name type="ordered locus">ECs5150</name>
</gene>
<keyword id="KW-0472">Membrane</keyword>
<keyword id="KW-1185">Reference proteome</keyword>
<keyword id="KW-0812">Transmembrane</keyword>
<keyword id="KW-1133">Transmembrane helix</keyword>
<feature type="chain" id="PRO_0000094086" description="Protein HflK">
    <location>
        <begin position="1"/>
        <end position="419"/>
    </location>
</feature>
<feature type="transmembrane region" description="Helical" evidence="2">
    <location>
        <begin position="80"/>
        <end position="100"/>
    </location>
</feature>
<feature type="region of interest" description="Disordered" evidence="3">
    <location>
        <begin position="1"/>
        <end position="75"/>
    </location>
</feature>
<feature type="region of interest" description="Disordered" evidence="3">
    <location>
        <begin position="364"/>
        <end position="419"/>
    </location>
</feature>
<feature type="compositionally biased region" description="Polar residues" evidence="3">
    <location>
        <begin position="1"/>
        <end position="10"/>
    </location>
</feature>
<feature type="compositionally biased region" description="Gly residues" evidence="3">
    <location>
        <begin position="53"/>
        <end position="68"/>
    </location>
</feature>
<feature type="compositionally biased region" description="Low complexity" evidence="3">
    <location>
        <begin position="383"/>
        <end position="397"/>
    </location>
</feature>
<protein>
    <recommendedName>
        <fullName>Protein HflK</fullName>
    </recommendedName>
</protein>
<comment type="function">
    <text evidence="1">HflC and HflK govern the stability of phage lambda cII protein and have been proposed to encode or regulate a cII-specific protease.</text>
</comment>
<comment type="subunit">
    <text evidence="1">HflC and HflK may interact to form a multimeric complex.</text>
</comment>
<comment type="subcellular location">
    <subcellularLocation>
        <location evidence="4">Membrane</location>
        <topology evidence="4">Single-pass membrane protein</topology>
    </subcellularLocation>
</comment>
<comment type="similarity">
    <text evidence="4">Belongs to the band 7/mec-2 family. HflK subfamily.</text>
</comment>
<reference key="1">
    <citation type="journal article" date="2001" name="Nature">
        <title>Genome sequence of enterohaemorrhagic Escherichia coli O157:H7.</title>
        <authorList>
            <person name="Perna N.T."/>
            <person name="Plunkett G. III"/>
            <person name="Burland V."/>
            <person name="Mau B."/>
            <person name="Glasner J.D."/>
            <person name="Rose D.J."/>
            <person name="Mayhew G.F."/>
            <person name="Evans P.S."/>
            <person name="Gregor J."/>
            <person name="Kirkpatrick H.A."/>
            <person name="Posfai G."/>
            <person name="Hackett J."/>
            <person name="Klink S."/>
            <person name="Boutin A."/>
            <person name="Shao Y."/>
            <person name="Miller L."/>
            <person name="Grotbeck E.J."/>
            <person name="Davis N.W."/>
            <person name="Lim A."/>
            <person name="Dimalanta E.T."/>
            <person name="Potamousis K."/>
            <person name="Apodaca J."/>
            <person name="Anantharaman T.S."/>
            <person name="Lin J."/>
            <person name="Yen G."/>
            <person name="Schwartz D.C."/>
            <person name="Welch R.A."/>
            <person name="Blattner F.R."/>
        </authorList>
    </citation>
    <scope>NUCLEOTIDE SEQUENCE [LARGE SCALE GENOMIC DNA]</scope>
    <source>
        <strain>O157:H7 / EDL933 / ATCC 700927 / EHEC</strain>
    </source>
</reference>
<reference key="2">
    <citation type="journal article" date="2001" name="DNA Res.">
        <title>Complete genome sequence of enterohemorrhagic Escherichia coli O157:H7 and genomic comparison with a laboratory strain K-12.</title>
        <authorList>
            <person name="Hayashi T."/>
            <person name="Makino K."/>
            <person name="Ohnishi M."/>
            <person name="Kurokawa K."/>
            <person name="Ishii K."/>
            <person name="Yokoyama K."/>
            <person name="Han C.-G."/>
            <person name="Ohtsubo E."/>
            <person name="Nakayama K."/>
            <person name="Murata T."/>
            <person name="Tanaka M."/>
            <person name="Tobe T."/>
            <person name="Iida T."/>
            <person name="Takami H."/>
            <person name="Honda T."/>
            <person name="Sasakawa C."/>
            <person name="Ogasawara N."/>
            <person name="Yasunaga T."/>
            <person name="Kuhara S."/>
            <person name="Shiba T."/>
            <person name="Hattori M."/>
            <person name="Shinagawa H."/>
        </authorList>
    </citation>
    <scope>NUCLEOTIDE SEQUENCE [LARGE SCALE GENOMIC DNA]</scope>
    <source>
        <strain>O157:H7 / Sakai / RIMD 0509952 / EHEC</strain>
    </source>
</reference>
<name>HFLK_ECO57</name>
<dbReference type="EMBL" id="AE005174">
    <property type="protein sequence ID" value="AAG59370.1"/>
    <property type="molecule type" value="Genomic_DNA"/>
</dbReference>
<dbReference type="EMBL" id="BA000007">
    <property type="protein sequence ID" value="BAB38573.1"/>
    <property type="molecule type" value="Genomic_DNA"/>
</dbReference>
<dbReference type="PIR" id="F86113">
    <property type="entry name" value="F86113"/>
</dbReference>
<dbReference type="PIR" id="F91272">
    <property type="entry name" value="F91272"/>
</dbReference>
<dbReference type="RefSeq" id="NP_313177.1">
    <property type="nucleotide sequence ID" value="NC_002695.1"/>
</dbReference>
<dbReference type="RefSeq" id="WP_000312488.1">
    <property type="nucleotide sequence ID" value="NZ_VOAI01000008.1"/>
</dbReference>
<dbReference type="SMR" id="P0ABC8"/>
<dbReference type="STRING" id="155864.Z5781"/>
<dbReference type="MEROPS" id="I87.002"/>
<dbReference type="GeneID" id="914055"/>
<dbReference type="GeneID" id="93777647"/>
<dbReference type="KEGG" id="ece:Z5781"/>
<dbReference type="KEGG" id="ecs:ECs_5150"/>
<dbReference type="PATRIC" id="fig|386585.9.peg.5383"/>
<dbReference type="eggNOG" id="COG0330">
    <property type="taxonomic scope" value="Bacteria"/>
</dbReference>
<dbReference type="HOGENOM" id="CLU_039173_1_0_6"/>
<dbReference type="OMA" id="AWNEPGG"/>
<dbReference type="Proteomes" id="UP000000558">
    <property type="component" value="Chromosome"/>
</dbReference>
<dbReference type="Proteomes" id="UP000002519">
    <property type="component" value="Chromosome"/>
</dbReference>
<dbReference type="GO" id="GO:0016020">
    <property type="term" value="C:membrane"/>
    <property type="evidence" value="ECO:0007669"/>
    <property type="project" value="UniProtKB-SubCell"/>
</dbReference>
<dbReference type="CDD" id="cd03404">
    <property type="entry name" value="SPFH_HflK"/>
    <property type="match status" value="1"/>
</dbReference>
<dbReference type="FunFam" id="3.30.479.30:FF:000007">
    <property type="entry name" value="Protein HflK"/>
    <property type="match status" value="1"/>
</dbReference>
<dbReference type="Gene3D" id="3.30.479.30">
    <property type="entry name" value="Band 7 domain"/>
    <property type="match status" value="1"/>
</dbReference>
<dbReference type="InterPro" id="IPR050710">
    <property type="entry name" value="Band7/mec-2_domain"/>
</dbReference>
<dbReference type="InterPro" id="IPR001107">
    <property type="entry name" value="Band_7"/>
</dbReference>
<dbReference type="InterPro" id="IPR036013">
    <property type="entry name" value="Band_7/SPFH_dom_sf"/>
</dbReference>
<dbReference type="InterPro" id="IPR010201">
    <property type="entry name" value="HflK"/>
</dbReference>
<dbReference type="InterPro" id="IPR020980">
    <property type="entry name" value="Membrane_HflK_N"/>
</dbReference>
<dbReference type="InterPro" id="IPR001972">
    <property type="entry name" value="Stomatin_HflK_fam"/>
</dbReference>
<dbReference type="NCBIfam" id="TIGR01933">
    <property type="entry name" value="hflK"/>
    <property type="match status" value="1"/>
</dbReference>
<dbReference type="NCBIfam" id="NF008181">
    <property type="entry name" value="PRK10930.1"/>
    <property type="match status" value="1"/>
</dbReference>
<dbReference type="PANTHER" id="PTHR43327:SF2">
    <property type="entry name" value="MODULATOR OF FTSH PROTEASE HFLK"/>
    <property type="match status" value="1"/>
</dbReference>
<dbReference type="PANTHER" id="PTHR43327">
    <property type="entry name" value="STOMATIN-LIKE PROTEIN 2, MITOCHONDRIAL"/>
    <property type="match status" value="1"/>
</dbReference>
<dbReference type="Pfam" id="PF01145">
    <property type="entry name" value="Band_7"/>
    <property type="match status" value="1"/>
</dbReference>
<dbReference type="Pfam" id="PF12221">
    <property type="entry name" value="HflK_N"/>
    <property type="match status" value="1"/>
</dbReference>
<dbReference type="PRINTS" id="PR00721">
    <property type="entry name" value="STOMATIN"/>
</dbReference>
<dbReference type="SMART" id="SM00244">
    <property type="entry name" value="PHB"/>
    <property type="match status" value="1"/>
</dbReference>
<dbReference type="SUPFAM" id="SSF117892">
    <property type="entry name" value="Band 7/SPFH domain"/>
    <property type="match status" value="1"/>
</dbReference>
<sequence length="419" mass="45545">MAWNQPGNNGQDRDPWGSSKPGGNSEGNGNKGGRDQGPPDLDDIFRKLSKKLGGLGGGKGTGSGGGSSSQGPRPQLGGRVVTIAAAAIVIIWAASGFYTIKEAERGVVTRFGKFSHLVEPGLNWKPTFIDEVKPVNVEAVRELAASGVMLTSDENVVRVEMNVQYRVTNPEKYLYSVTSPDDSLRQATDSALRGVIGKYTMDRILTEGRTVIRSDTQRELEETIRPYDMGITLLDVNFQAARPPEEVKAAFDDAIAARENEQQYIREAEAYTNEVQPRANGQAQRILEEARAYKAQTILEAQGEVARFAKLLPEYKAAPEITRERLYIETMEKVLGNTRKVLVNDKGGNLMVLPLDQMLKGGNAPAAKSDNGASNLLRLPPASSSTTSGASNTSSTSQGDIMDQRRANAQRNDYQRQGE</sequence>
<proteinExistence type="inferred from homology"/>
<evidence type="ECO:0000250" key="1"/>
<evidence type="ECO:0000255" key="2"/>
<evidence type="ECO:0000256" key="3">
    <source>
        <dbReference type="SAM" id="MobiDB-lite"/>
    </source>
</evidence>
<evidence type="ECO:0000305" key="4"/>
<accession>P0ABC8</accession>
<accession>P25662</accession>